<evidence type="ECO:0000255" key="1">
    <source>
        <dbReference type="HAMAP-Rule" id="MF_01276"/>
    </source>
</evidence>
<evidence type="ECO:0000305" key="2"/>
<keyword id="KW-0032">Aminotransferase</keyword>
<keyword id="KW-0663">Pyridoxal phosphate</keyword>
<keyword id="KW-0808">Transferase</keyword>
<sequence>MNRLPSSASALACSAHALNLIEKRTLDHEEMKALNREVIEYFKEHVNPGFLEYRKSVTAGGDYGAVEWQAGGLNTLVDTQGQEFIDCLGGFGIFNVGHRNPVVVSAVQNQLAKQPLHSQELLDPLRAMLAKTVAALTPGKLKYSFFCNSGTESVEAALKLAKAYQSPRGKFTFIATSGAFHGKSLGALSATAKSTFRKPFMPLLPGFRHVPFGNIEAMRTALNECKKTGDDVAAVILEPIQGEGGVILPPPGYLTAVRKLCDEFGALMILDEVQTGMGRTGKMFACEHENVQPDILCLAKALGGGVMPIGATIATEEVFSVLFDNPFLHTTTFGGNPLACAAALATINVLLEQNLPAQAEQKGDMLLDGFRQLAREYPDLVQEARGKGMLMAIEFVDNEIGYNFASEMFRQRVLVAGTLNNAKTIRIEPPLTLTIEQCELVIKAAHKALAAMRVSVEEA</sequence>
<accession>B7LZM2</accession>
<organism>
    <name type="scientific">Escherichia coli O8 (strain IAI1)</name>
    <dbReference type="NCBI Taxonomy" id="585034"/>
    <lineage>
        <taxon>Bacteria</taxon>
        <taxon>Pseudomonadati</taxon>
        <taxon>Pseudomonadota</taxon>
        <taxon>Gammaproteobacteria</taxon>
        <taxon>Enterobacterales</taxon>
        <taxon>Enterobacteriaceae</taxon>
        <taxon>Escherichia</taxon>
    </lineage>
</organism>
<dbReference type="EC" id="2.6.1.82" evidence="1"/>
<dbReference type="EC" id="2.6.1.29" evidence="1"/>
<dbReference type="EMBL" id="CU928160">
    <property type="protein sequence ID" value="CAR00034.1"/>
    <property type="status" value="ALT_INIT"/>
    <property type="molecule type" value="Genomic_DNA"/>
</dbReference>
<dbReference type="SMR" id="B7LZM2"/>
<dbReference type="KEGG" id="ecr:ECIAI1_3220"/>
<dbReference type="HOGENOM" id="CLU_016922_10_0_6"/>
<dbReference type="UniPathway" id="UPA00188">
    <property type="reaction ID" value="UER00290"/>
</dbReference>
<dbReference type="GO" id="GO:0019161">
    <property type="term" value="F:diamine transaminase activity"/>
    <property type="evidence" value="ECO:0007669"/>
    <property type="project" value="UniProtKB-EC"/>
</dbReference>
<dbReference type="GO" id="GO:0042802">
    <property type="term" value="F:identical protein binding"/>
    <property type="evidence" value="ECO:0007669"/>
    <property type="project" value="TreeGrafter"/>
</dbReference>
<dbReference type="GO" id="GO:0033094">
    <property type="term" value="F:putrescine--2-oxoglutarate transaminase activity"/>
    <property type="evidence" value="ECO:0007669"/>
    <property type="project" value="UniProtKB-UniRule"/>
</dbReference>
<dbReference type="GO" id="GO:0030170">
    <property type="term" value="F:pyridoxal phosphate binding"/>
    <property type="evidence" value="ECO:0007669"/>
    <property type="project" value="UniProtKB-UniRule"/>
</dbReference>
<dbReference type="GO" id="GO:0019477">
    <property type="term" value="P:L-lysine catabolic process"/>
    <property type="evidence" value="ECO:0007669"/>
    <property type="project" value="UniProtKB-UniRule"/>
</dbReference>
<dbReference type="GO" id="GO:0009447">
    <property type="term" value="P:putrescine catabolic process"/>
    <property type="evidence" value="ECO:0007669"/>
    <property type="project" value="UniProtKB-UniRule"/>
</dbReference>
<dbReference type="CDD" id="cd00610">
    <property type="entry name" value="OAT_like"/>
    <property type="match status" value="1"/>
</dbReference>
<dbReference type="FunFam" id="3.40.640.10:FF:000004">
    <property type="entry name" value="Acetylornithine aminotransferase"/>
    <property type="match status" value="1"/>
</dbReference>
<dbReference type="Gene3D" id="3.90.1150.10">
    <property type="entry name" value="Aspartate Aminotransferase, domain 1"/>
    <property type="match status" value="1"/>
</dbReference>
<dbReference type="Gene3D" id="3.40.640.10">
    <property type="entry name" value="Type I PLP-dependent aspartate aminotransferase-like (Major domain)"/>
    <property type="match status" value="1"/>
</dbReference>
<dbReference type="HAMAP" id="MF_01276">
    <property type="entry name" value="Putres_aminotrans_3"/>
    <property type="match status" value="1"/>
</dbReference>
<dbReference type="InterPro" id="IPR005814">
    <property type="entry name" value="Aminotrans_3"/>
</dbReference>
<dbReference type="InterPro" id="IPR049704">
    <property type="entry name" value="Aminotrans_3_PPA_site"/>
</dbReference>
<dbReference type="InterPro" id="IPR050103">
    <property type="entry name" value="Class-III_PLP-dep_AT"/>
</dbReference>
<dbReference type="InterPro" id="IPR017747">
    <property type="entry name" value="Putrescine_aminotransferase"/>
</dbReference>
<dbReference type="InterPro" id="IPR015424">
    <property type="entry name" value="PyrdxlP-dep_Trfase"/>
</dbReference>
<dbReference type="InterPro" id="IPR015421">
    <property type="entry name" value="PyrdxlP-dep_Trfase_major"/>
</dbReference>
<dbReference type="InterPro" id="IPR015422">
    <property type="entry name" value="PyrdxlP-dep_Trfase_small"/>
</dbReference>
<dbReference type="NCBIfam" id="NF008570">
    <property type="entry name" value="PRK11522.1"/>
    <property type="match status" value="1"/>
</dbReference>
<dbReference type="NCBIfam" id="TIGR03372">
    <property type="entry name" value="putres_am_tran"/>
    <property type="match status" value="1"/>
</dbReference>
<dbReference type="PANTHER" id="PTHR11986">
    <property type="entry name" value="AMINOTRANSFERASE CLASS III"/>
    <property type="match status" value="1"/>
</dbReference>
<dbReference type="PANTHER" id="PTHR11986:SF112">
    <property type="entry name" value="PUTRESCINE AMINOTRANSFERASE"/>
    <property type="match status" value="1"/>
</dbReference>
<dbReference type="Pfam" id="PF00202">
    <property type="entry name" value="Aminotran_3"/>
    <property type="match status" value="1"/>
</dbReference>
<dbReference type="PIRSF" id="PIRSF000521">
    <property type="entry name" value="Transaminase_4ab_Lys_Orn"/>
    <property type="match status" value="1"/>
</dbReference>
<dbReference type="SUPFAM" id="SSF53383">
    <property type="entry name" value="PLP-dependent transferases"/>
    <property type="match status" value="1"/>
</dbReference>
<dbReference type="PROSITE" id="PS00600">
    <property type="entry name" value="AA_TRANSFER_CLASS_3"/>
    <property type="match status" value="1"/>
</dbReference>
<proteinExistence type="inferred from homology"/>
<comment type="function">
    <text evidence="1">Catalyzes the aminotransferase reaction from putrescine to 2-oxoglutarate, leading to glutamate and 4-aminobutanal, which spontaneously cyclizes to form 1-pyrroline. This is the first step in one of two pathways for putrescine degradation, where putrescine is converted into 4-aminobutanoate (gamma-aminobutyrate or GABA) via 4-aminobutanal. Also functions as a cadaverine transaminase in a a L-lysine degradation pathway to succinate that proceeds via cadaverine, glutarate and L-2-hydroxyglutarate.</text>
</comment>
<comment type="catalytic activity">
    <reaction evidence="1">
        <text>an alkane-alpha,omega-diamine + 2-oxoglutarate = an omega-aminoaldehyde + L-glutamate</text>
        <dbReference type="Rhea" id="RHEA:18217"/>
        <dbReference type="Rhea" id="RHEA-COMP:9766"/>
        <dbReference type="Rhea" id="RHEA-COMP:12750"/>
        <dbReference type="ChEBI" id="CHEBI:16810"/>
        <dbReference type="ChEBI" id="CHEBI:29985"/>
        <dbReference type="ChEBI" id="CHEBI:70977"/>
        <dbReference type="ChEBI" id="CHEBI:133427"/>
        <dbReference type="EC" id="2.6.1.29"/>
    </reaction>
    <physiologicalReaction direction="left-to-right" evidence="1">
        <dbReference type="Rhea" id="RHEA:18218"/>
    </physiologicalReaction>
</comment>
<comment type="catalytic activity">
    <reaction evidence="1">
        <text>putrescine + 2-oxoglutarate = 1-pyrroline + L-glutamate + H2O</text>
        <dbReference type="Rhea" id="RHEA:12268"/>
        <dbReference type="ChEBI" id="CHEBI:15377"/>
        <dbReference type="ChEBI" id="CHEBI:16810"/>
        <dbReference type="ChEBI" id="CHEBI:29985"/>
        <dbReference type="ChEBI" id="CHEBI:36781"/>
        <dbReference type="ChEBI" id="CHEBI:326268"/>
        <dbReference type="EC" id="2.6.1.82"/>
    </reaction>
    <physiologicalReaction direction="left-to-right" evidence="1">
        <dbReference type="Rhea" id="RHEA:12269"/>
    </physiologicalReaction>
</comment>
<comment type="catalytic activity">
    <reaction evidence="1">
        <text>cadaverine + 2-oxoglutarate = 5-aminopentanal + L-glutamate</text>
        <dbReference type="Rhea" id="RHEA:61624"/>
        <dbReference type="ChEBI" id="CHEBI:16810"/>
        <dbReference type="ChEBI" id="CHEBI:29985"/>
        <dbReference type="ChEBI" id="CHEBI:58384"/>
        <dbReference type="ChEBI" id="CHEBI:144896"/>
    </reaction>
    <physiologicalReaction direction="left-to-right" evidence="1">
        <dbReference type="Rhea" id="RHEA:61625"/>
    </physiologicalReaction>
</comment>
<comment type="cofactor">
    <cofactor evidence="1">
        <name>pyridoxal 5'-phosphate</name>
        <dbReference type="ChEBI" id="CHEBI:597326"/>
    </cofactor>
</comment>
<comment type="pathway">
    <text evidence="1">Amine and polyamine degradation; putrescine degradation; 4-aminobutanal from putrescine (transaminase route): step 1/1.</text>
</comment>
<comment type="similarity">
    <text evidence="1">Belongs to the class-III pyridoxal-phosphate-dependent aminotransferase family. Putrescine aminotransferase subfamily.</text>
</comment>
<comment type="sequence caution" evidence="2">
    <conflict type="erroneous initiation">
        <sequence resource="EMBL-CDS" id="CAR00034"/>
    </conflict>
</comment>
<name>PAT_ECO8A</name>
<reference key="1">
    <citation type="journal article" date="2009" name="PLoS Genet.">
        <title>Organised genome dynamics in the Escherichia coli species results in highly diverse adaptive paths.</title>
        <authorList>
            <person name="Touchon M."/>
            <person name="Hoede C."/>
            <person name="Tenaillon O."/>
            <person name="Barbe V."/>
            <person name="Baeriswyl S."/>
            <person name="Bidet P."/>
            <person name="Bingen E."/>
            <person name="Bonacorsi S."/>
            <person name="Bouchier C."/>
            <person name="Bouvet O."/>
            <person name="Calteau A."/>
            <person name="Chiapello H."/>
            <person name="Clermont O."/>
            <person name="Cruveiller S."/>
            <person name="Danchin A."/>
            <person name="Diard M."/>
            <person name="Dossat C."/>
            <person name="Karoui M.E."/>
            <person name="Frapy E."/>
            <person name="Garry L."/>
            <person name="Ghigo J.M."/>
            <person name="Gilles A.M."/>
            <person name="Johnson J."/>
            <person name="Le Bouguenec C."/>
            <person name="Lescat M."/>
            <person name="Mangenot S."/>
            <person name="Martinez-Jehanne V."/>
            <person name="Matic I."/>
            <person name="Nassif X."/>
            <person name="Oztas S."/>
            <person name="Petit M.A."/>
            <person name="Pichon C."/>
            <person name="Rouy Z."/>
            <person name="Ruf C.S."/>
            <person name="Schneider D."/>
            <person name="Tourret J."/>
            <person name="Vacherie B."/>
            <person name="Vallenet D."/>
            <person name="Medigue C."/>
            <person name="Rocha E.P.C."/>
            <person name="Denamur E."/>
        </authorList>
    </citation>
    <scope>NUCLEOTIDE SEQUENCE [LARGE SCALE GENOMIC DNA]</scope>
    <source>
        <strain>IAI1</strain>
    </source>
</reference>
<protein>
    <recommendedName>
        <fullName evidence="1">Putrescine aminotransferase</fullName>
        <shortName evidence="1">PAT</shortName>
        <shortName evidence="1">PATase</shortName>
        <ecNumber evidence="1">2.6.1.82</ecNumber>
    </recommendedName>
    <alternativeName>
        <fullName evidence="1">Cadaverine transaminase</fullName>
    </alternativeName>
    <alternativeName>
        <fullName evidence="1">Diamine transaminase</fullName>
        <ecNumber evidence="1">2.6.1.29</ecNumber>
    </alternativeName>
    <alternativeName>
        <fullName evidence="1">Putrescine transaminase</fullName>
    </alternativeName>
    <alternativeName>
        <fullName evidence="1">Putrescine--2-oxoglutaric acid transaminase</fullName>
    </alternativeName>
</protein>
<feature type="chain" id="PRO_0000379550" description="Putrescine aminotransferase">
    <location>
        <begin position="1"/>
        <end position="459"/>
    </location>
</feature>
<feature type="binding site" description="in other chain" evidence="1">
    <location>
        <begin position="150"/>
        <end position="151"/>
    </location>
    <ligand>
        <name>pyridoxal 5'-phosphate</name>
        <dbReference type="ChEBI" id="CHEBI:597326"/>
        <note>ligand shared between dimeric partners</note>
    </ligand>
</feature>
<feature type="binding site" description="in other chain" evidence="1">
    <location>
        <position position="274"/>
    </location>
    <ligand>
        <name>pyridoxal 5'-phosphate</name>
        <dbReference type="ChEBI" id="CHEBI:597326"/>
        <note>ligand shared between dimeric partners</note>
    </ligand>
</feature>
<feature type="binding site" evidence="1">
    <location>
        <position position="332"/>
    </location>
    <ligand>
        <name>pyridoxal 5'-phosphate</name>
        <dbReference type="ChEBI" id="CHEBI:597326"/>
        <note>ligand shared between dimeric partners</note>
    </ligand>
</feature>
<feature type="modified residue" description="N6-(pyridoxal phosphate)lysine" evidence="1">
    <location>
        <position position="300"/>
    </location>
</feature>
<gene>
    <name evidence="1" type="primary">patA</name>
    <name type="ordered locus">ECIAI1_3220</name>
</gene>